<dbReference type="EC" id="3.1.13.1" evidence="3"/>
<dbReference type="EMBL" id="BC089828">
    <property type="protein sequence ID" value="AAH89828.1"/>
    <property type="molecule type" value="mRNA"/>
</dbReference>
<dbReference type="RefSeq" id="NP_001014165.1">
    <property type="nucleotide sequence ID" value="NM_001014143.1"/>
</dbReference>
<dbReference type="SMR" id="Q5FVR4"/>
<dbReference type="FunCoup" id="Q5FVR4">
    <property type="interactions" value="2065"/>
</dbReference>
<dbReference type="IntAct" id="Q5FVR4">
    <property type="interactions" value="5"/>
</dbReference>
<dbReference type="STRING" id="10116.ENSRNOP00000015239"/>
<dbReference type="PhosphoSitePlus" id="Q5FVR4"/>
<dbReference type="PaxDb" id="10116-ENSRNOP00000015239"/>
<dbReference type="Ensembl" id="ENSRNOT00000015239.7">
    <property type="protein sequence ID" value="ENSRNOP00000015239.5"/>
    <property type="gene ID" value="ENSRNOG00000011448.7"/>
</dbReference>
<dbReference type="GeneID" id="361159"/>
<dbReference type="KEGG" id="rno:361159"/>
<dbReference type="UCSC" id="RGD:1308378">
    <property type="organism name" value="rat"/>
</dbReference>
<dbReference type="AGR" id="RGD:1308378"/>
<dbReference type="CTD" id="90459"/>
<dbReference type="RGD" id="1308378">
    <property type="gene designation" value="Eri1"/>
</dbReference>
<dbReference type="eggNOG" id="KOG0542">
    <property type="taxonomic scope" value="Eukaryota"/>
</dbReference>
<dbReference type="GeneTree" id="ENSGT00530000063205"/>
<dbReference type="HOGENOM" id="CLU_037266_4_1_1"/>
<dbReference type="InParanoid" id="Q5FVR4"/>
<dbReference type="OMA" id="MHSGQLM"/>
<dbReference type="OrthoDB" id="448399at2759"/>
<dbReference type="PhylomeDB" id="Q5FVR4"/>
<dbReference type="TreeFam" id="TF313449"/>
<dbReference type="Reactome" id="R-RNO-6791226">
    <property type="pathway name" value="Major pathway of rRNA processing in the nucleolus and cytosol"/>
</dbReference>
<dbReference type="PRO" id="PR:Q5FVR4"/>
<dbReference type="Proteomes" id="UP000002494">
    <property type="component" value="Chromosome 16"/>
</dbReference>
<dbReference type="Bgee" id="ENSRNOG00000011448">
    <property type="expression patterns" value="Expressed in thymus and 19 other cell types or tissues"/>
</dbReference>
<dbReference type="GO" id="GO:0005737">
    <property type="term" value="C:cytoplasm"/>
    <property type="evidence" value="ECO:0000250"/>
    <property type="project" value="UniProtKB"/>
</dbReference>
<dbReference type="GO" id="GO:0071204">
    <property type="term" value="C:histone pre-mRNA 3'end processing complex"/>
    <property type="evidence" value="ECO:0000250"/>
    <property type="project" value="UniProtKB"/>
</dbReference>
<dbReference type="GO" id="GO:0005730">
    <property type="term" value="C:nucleolus"/>
    <property type="evidence" value="ECO:0000250"/>
    <property type="project" value="UniProtKB"/>
</dbReference>
<dbReference type="GO" id="GO:0005634">
    <property type="term" value="C:nucleus"/>
    <property type="evidence" value="ECO:0000250"/>
    <property type="project" value="UniProtKB"/>
</dbReference>
<dbReference type="GO" id="GO:0008408">
    <property type="term" value="F:3'-5' exonuclease activity"/>
    <property type="evidence" value="ECO:0000250"/>
    <property type="project" value="UniProtKB"/>
</dbReference>
<dbReference type="GO" id="GO:0000175">
    <property type="term" value="F:3'-5'-RNA exonuclease activity"/>
    <property type="evidence" value="ECO:0000318"/>
    <property type="project" value="GO_Central"/>
</dbReference>
<dbReference type="GO" id="GO:0071207">
    <property type="term" value="F:histone pre-mRNA stem-loop binding"/>
    <property type="evidence" value="ECO:0000250"/>
    <property type="project" value="UniProtKB"/>
</dbReference>
<dbReference type="GO" id="GO:0046872">
    <property type="term" value="F:metal ion binding"/>
    <property type="evidence" value="ECO:0007669"/>
    <property type="project" value="UniProtKB-KW"/>
</dbReference>
<dbReference type="GO" id="GO:0043022">
    <property type="term" value="F:ribosome binding"/>
    <property type="evidence" value="ECO:0000250"/>
    <property type="project" value="UniProtKB"/>
</dbReference>
<dbReference type="GO" id="GO:0019843">
    <property type="term" value="F:rRNA binding"/>
    <property type="evidence" value="ECO:0000250"/>
    <property type="project" value="UniProtKB"/>
</dbReference>
<dbReference type="GO" id="GO:0000467">
    <property type="term" value="P:exonucleolytic trimming to generate mature 3'-end of 5.8S rRNA from tricistronic rRNA transcript (SSU-rRNA, 5.8S rRNA, LSU-rRNA)"/>
    <property type="evidence" value="ECO:0000318"/>
    <property type="project" value="GO_Central"/>
</dbReference>
<dbReference type="GO" id="GO:0000460">
    <property type="term" value="P:maturation of 5.8S rRNA"/>
    <property type="evidence" value="ECO:0000266"/>
    <property type="project" value="RGD"/>
</dbReference>
<dbReference type="GO" id="GO:0031047">
    <property type="term" value="P:regulatory ncRNA-mediated gene silencing"/>
    <property type="evidence" value="ECO:0007669"/>
    <property type="project" value="UniProtKB-KW"/>
</dbReference>
<dbReference type="GO" id="GO:0031125">
    <property type="term" value="P:rRNA 3'-end processing"/>
    <property type="evidence" value="ECO:0000250"/>
    <property type="project" value="UniProtKB"/>
</dbReference>
<dbReference type="CDD" id="cd06133">
    <property type="entry name" value="ERI-1_3'hExo_like"/>
    <property type="match status" value="1"/>
</dbReference>
<dbReference type="FunFam" id="1.10.720.30:FF:000015">
    <property type="entry name" value="3'-5' exoribonuclease 1"/>
    <property type="match status" value="1"/>
</dbReference>
<dbReference type="FunFam" id="3.30.420.10:FF:000034">
    <property type="entry name" value="3'-5' exoribonuclease 1"/>
    <property type="match status" value="1"/>
</dbReference>
<dbReference type="Gene3D" id="3.30.420.10">
    <property type="entry name" value="Ribonuclease H-like superfamily/Ribonuclease H"/>
    <property type="match status" value="1"/>
</dbReference>
<dbReference type="Gene3D" id="1.10.720.30">
    <property type="entry name" value="SAP domain"/>
    <property type="match status" value="1"/>
</dbReference>
<dbReference type="InterPro" id="IPR051274">
    <property type="entry name" value="3-5_Exoribonuclease"/>
</dbReference>
<dbReference type="InterPro" id="IPR047201">
    <property type="entry name" value="ERI-1_3'hExo-like"/>
</dbReference>
<dbReference type="InterPro" id="IPR013520">
    <property type="entry name" value="Exonuclease_RNaseT/DNA_pol3"/>
</dbReference>
<dbReference type="InterPro" id="IPR012337">
    <property type="entry name" value="RNaseH-like_sf"/>
</dbReference>
<dbReference type="InterPro" id="IPR036397">
    <property type="entry name" value="RNaseH_sf"/>
</dbReference>
<dbReference type="InterPro" id="IPR003034">
    <property type="entry name" value="SAP_dom"/>
</dbReference>
<dbReference type="InterPro" id="IPR036361">
    <property type="entry name" value="SAP_dom_sf"/>
</dbReference>
<dbReference type="PANTHER" id="PTHR23044">
    <property type="entry name" value="3'-5' EXONUCLEASE ERI1-RELATED"/>
    <property type="match status" value="1"/>
</dbReference>
<dbReference type="PANTHER" id="PTHR23044:SF61">
    <property type="entry name" value="3'-5' EXORIBONUCLEASE 1-RELATED"/>
    <property type="match status" value="1"/>
</dbReference>
<dbReference type="Pfam" id="PF00929">
    <property type="entry name" value="RNase_T"/>
    <property type="match status" value="1"/>
</dbReference>
<dbReference type="Pfam" id="PF02037">
    <property type="entry name" value="SAP"/>
    <property type="match status" value="1"/>
</dbReference>
<dbReference type="SMART" id="SM00479">
    <property type="entry name" value="EXOIII"/>
    <property type="match status" value="1"/>
</dbReference>
<dbReference type="SMART" id="SM00513">
    <property type="entry name" value="SAP"/>
    <property type="match status" value="1"/>
</dbReference>
<dbReference type="SUPFAM" id="SSF53098">
    <property type="entry name" value="Ribonuclease H-like"/>
    <property type="match status" value="1"/>
</dbReference>
<dbReference type="SUPFAM" id="SSF68906">
    <property type="entry name" value="SAP domain"/>
    <property type="match status" value="1"/>
</dbReference>
<dbReference type="PROSITE" id="PS50800">
    <property type="entry name" value="SAP"/>
    <property type="match status" value="1"/>
</dbReference>
<evidence type="ECO:0000250" key="1"/>
<evidence type="ECO:0000250" key="2">
    <source>
        <dbReference type="UniProtKB" id="Q7TMF2"/>
    </source>
</evidence>
<evidence type="ECO:0000250" key="3">
    <source>
        <dbReference type="UniProtKB" id="Q8IV48"/>
    </source>
</evidence>
<evidence type="ECO:0000255" key="4"/>
<evidence type="ECO:0000255" key="5">
    <source>
        <dbReference type="PROSITE-ProRule" id="PRU00186"/>
    </source>
</evidence>
<evidence type="ECO:0000256" key="6">
    <source>
        <dbReference type="SAM" id="MobiDB-lite"/>
    </source>
</evidence>
<organism>
    <name type="scientific">Rattus norvegicus</name>
    <name type="common">Rat</name>
    <dbReference type="NCBI Taxonomy" id="10116"/>
    <lineage>
        <taxon>Eukaryota</taxon>
        <taxon>Metazoa</taxon>
        <taxon>Chordata</taxon>
        <taxon>Craniata</taxon>
        <taxon>Vertebrata</taxon>
        <taxon>Euteleostomi</taxon>
        <taxon>Mammalia</taxon>
        <taxon>Eutheria</taxon>
        <taxon>Euarchontoglires</taxon>
        <taxon>Glires</taxon>
        <taxon>Rodentia</taxon>
        <taxon>Myomorpha</taxon>
        <taxon>Muroidea</taxon>
        <taxon>Muridae</taxon>
        <taxon>Murinae</taxon>
        <taxon>Rattus</taxon>
    </lineage>
</organism>
<accession>Q5FVR4</accession>
<feature type="chain" id="PRO_0000187009" description="3'-5' exoribonuclease 1">
    <location>
        <begin position="1"/>
        <end position="345"/>
    </location>
</feature>
<feature type="domain" description="SAP" evidence="5">
    <location>
        <begin position="72"/>
        <end position="106"/>
    </location>
</feature>
<feature type="domain" description="Exonuclease" evidence="4">
    <location>
        <begin position="126"/>
        <end position="302"/>
    </location>
</feature>
<feature type="region of interest" description="Disordered" evidence="6">
    <location>
        <begin position="1"/>
        <end position="40"/>
    </location>
</feature>
<feature type="compositionally biased region" description="Basic and acidic residues" evidence="6">
    <location>
        <begin position="1"/>
        <end position="11"/>
    </location>
</feature>
<feature type="compositionally biased region" description="Basic and acidic residues" evidence="6">
    <location>
        <begin position="19"/>
        <end position="40"/>
    </location>
</feature>
<feature type="active site" description="Proton acceptor" evidence="3">
    <location>
        <position position="132"/>
    </location>
</feature>
<feature type="active site" description="Proton acceptor" evidence="3">
    <location>
        <position position="289"/>
    </location>
</feature>
<feature type="binding site" evidence="3">
    <location>
        <position position="130"/>
    </location>
    <ligand>
        <name>Mg(2+)</name>
        <dbReference type="ChEBI" id="CHEBI:18420"/>
        <label>1</label>
    </ligand>
</feature>
<feature type="binding site" evidence="3">
    <location>
        <position position="130"/>
    </location>
    <ligand>
        <name>Mg(2+)</name>
        <dbReference type="ChEBI" id="CHEBI:18420"/>
        <label>2</label>
    </ligand>
</feature>
<feature type="binding site" evidence="3">
    <location>
        <position position="132"/>
    </location>
    <ligand>
        <name>AMP</name>
        <dbReference type="ChEBI" id="CHEBI:456215"/>
    </ligand>
</feature>
<feature type="binding site" evidence="3">
    <location>
        <position position="132"/>
    </location>
    <ligand>
        <name>Mg(2+)</name>
        <dbReference type="ChEBI" id="CHEBI:18420"/>
        <label>1</label>
    </ligand>
</feature>
<feature type="binding site" evidence="3">
    <location>
        <position position="133"/>
    </location>
    <ligand>
        <name>AMP</name>
        <dbReference type="ChEBI" id="CHEBI:456215"/>
    </ligand>
</feature>
<feature type="binding site" evidence="3">
    <location>
        <position position="230"/>
    </location>
    <ligand>
        <name>Mg(2+)</name>
        <dbReference type="ChEBI" id="CHEBI:18420"/>
        <label>2</label>
    </ligand>
</feature>
<feature type="binding site" evidence="3">
    <location>
        <position position="289"/>
    </location>
    <ligand>
        <name>AMP</name>
        <dbReference type="ChEBI" id="CHEBI:456215"/>
    </ligand>
</feature>
<feature type="binding site" evidence="3">
    <location>
        <position position="294"/>
    </location>
    <ligand>
        <name>Mg(2+)</name>
        <dbReference type="ChEBI" id="CHEBI:18420"/>
        <label>1</label>
    </ligand>
</feature>
<feature type="modified residue" description="Phosphoserine" evidence="3">
    <location>
        <position position="58"/>
    </location>
</feature>
<name>ERI1_RAT</name>
<reference key="1">
    <citation type="journal article" date="2004" name="Genome Res.">
        <title>The status, quality, and expansion of the NIH full-length cDNA project: the Mammalian Gene Collection (MGC).</title>
        <authorList>
            <consortium name="The MGC Project Team"/>
        </authorList>
    </citation>
    <scope>NUCLEOTIDE SEQUENCE [LARGE SCALE MRNA]</scope>
    <source>
        <tissue>Liver</tissue>
    </source>
</reference>
<protein>
    <recommendedName>
        <fullName>3'-5' exoribonuclease 1</fullName>
        <ecNumber evidence="3">3.1.13.1</ecNumber>
    </recommendedName>
    <alternativeName>
        <fullName>Histone mRNA 3'-exonuclease 1</fullName>
    </alternativeName>
</protein>
<sequence>MEDERGREHGGDAAQQKTPRPECEESRPLSVEKKQRCRLDGKDTDGSKFITSNGGDFSDPVYKEIAMTNGCINRMSKEELRAKLSEFKLETRGVKDVLKKRLKNYYKKQKLMLKESNAVDSYYDYICIIDFEATCEEGNPAEFLHEIIEFPVVLLNTHSLEIEDTFQQYVRPEVNSQLSEFCIGLTGITQDQVDRADAFPQVLKKVIEWMKSKELGTKYKYCILTDGSWDMSKFLNIQCQLSRLKYPSFAKKWINIRKSYGNFYKVPRSQTKLTIMLEKLGMDYDGRPHSGLDDSKNIARIAVRMLQDGCELRINEKLHGGQLMSVSSSLPVEGAPAPQMPHSRK</sequence>
<proteinExistence type="evidence at transcript level"/>
<keyword id="KW-0963">Cytoplasm</keyword>
<keyword id="KW-0269">Exonuclease</keyword>
<keyword id="KW-0378">Hydrolase</keyword>
<keyword id="KW-0460">Magnesium</keyword>
<keyword id="KW-0479">Metal-binding</keyword>
<keyword id="KW-0540">Nuclease</keyword>
<keyword id="KW-0539">Nucleus</keyword>
<keyword id="KW-0597">Phosphoprotein</keyword>
<keyword id="KW-1185">Reference proteome</keyword>
<keyword id="KW-0694">RNA-binding</keyword>
<keyword id="KW-0943">RNA-mediated gene silencing</keyword>
<keyword id="KW-0698">rRNA processing</keyword>
<gene>
    <name type="primary">Eri1</name>
    <name type="synonym">Thex1</name>
</gene>
<comment type="function">
    <text evidence="2 3">RNA exonuclease that binds to the 3'-end of histone mRNAs and degrades them, suggesting that it plays an essential role in histone mRNA decay after replication. A 2' and 3'-hydroxyl groups at the last nucleotide of the histone 3'-end is required for efficient 3'-end histone mRNA exonuclease activity and degradation of RNA substrates. Also able to degrade the 3'-overhangs of short interfering RNAs (siRNAs) in vitro, suggesting a possible role as regulator of RNA interference (RNAi). Required for binding the 5'-ACCCA-3' sequence present in stem-loop structure. Able to bind other mRNAs (By similarity). Required for 5.8S rRNA 3'-end processing. Also binds to 5.8s ribosomal RNA (By similarity). Binds with high affinity to the stem-loop structure of replication-dependent histone pre-mRNAs. In vitro, does not have sequence specificity. In vitro, has weak DNA exonuclease activity. In vitro, shows biphasic kinetics such that there is rapid hydrolysis of the last three unpaired RNA nucleotides in the 39 flanking sequence followed by a much slower cleavage through the stem that occurs over a longer incubation period in the order of hours (By similarity). ERI1-mediated RNA metabolism plays a key role in chondrogenesis (By similarity).</text>
</comment>
<comment type="catalytic activity">
    <reaction evidence="3">
        <text>Exonucleolytic cleavage in the 3'- to 5'-direction to yield nucleoside 5'-phosphates.</text>
        <dbReference type="EC" id="3.1.13.1"/>
    </reaction>
</comment>
<comment type="cofactor">
    <cofactor evidence="3">
        <name>Mg(2+)</name>
        <dbReference type="ChEBI" id="CHEBI:18420"/>
    </cofactor>
    <text evidence="3">Binds 2 magnesium ions per subunit.</text>
</comment>
<comment type="activity regulation">
    <text evidence="3">Although it can bind simultaneously with SLBP to the 3'-end of histone mRNA, the presence of SLBP prevents the exonuclease activity.</text>
</comment>
<comment type="subunit">
    <text evidence="3">Identified in a histone pre-mRNA complex, at least composed of ERI1, LSM11, SLBP, SNRPB, SYNCRIP and YBX1. Binds to 40S and 60S ribosomal subunits and to 80S assembled ribosomes. Interacts in a cooperative manner with SLBP to the mature 3'-end of histone mRNAs. Found in a ternary complex with SLBP and the stem-loop structure of the 3'-end of histone mRNAs (By similarity).</text>
</comment>
<comment type="subcellular location">
    <subcellularLocation>
        <location evidence="3">Cytoplasm</location>
    </subcellularLocation>
    <subcellularLocation>
        <location evidence="3">Nucleus</location>
    </subcellularLocation>
    <subcellularLocation>
        <location evidence="3">Nucleus</location>
        <location evidence="3">Nucleolus</location>
    </subcellularLocation>
</comment>
<comment type="domain">
    <text evidence="1">The SAP domain is necessary for binding to the stem-loop structure of histone mRNAs and to form the ternary complex with SLBP, but not for 3'-end histone mRNA exonuclease activity.</text>
</comment>